<name>MDH_PSEP1</name>
<feature type="chain" id="PRO_1000191652" description="Malate dehydrogenase">
    <location>
        <begin position="1"/>
        <end position="309"/>
    </location>
</feature>
<feature type="active site" description="Proton acceptor" evidence="1">
    <location>
        <position position="175"/>
    </location>
</feature>
<feature type="binding site" evidence="1">
    <location>
        <begin position="8"/>
        <end position="13"/>
    </location>
    <ligand>
        <name>NAD(+)</name>
        <dbReference type="ChEBI" id="CHEBI:57540"/>
    </ligand>
</feature>
<feature type="binding site" evidence="1">
    <location>
        <position position="33"/>
    </location>
    <ligand>
        <name>NAD(+)</name>
        <dbReference type="ChEBI" id="CHEBI:57540"/>
    </ligand>
</feature>
<feature type="binding site" evidence="1">
    <location>
        <position position="82"/>
    </location>
    <ligand>
        <name>substrate</name>
    </ligand>
</feature>
<feature type="binding site" evidence="1">
    <location>
        <position position="88"/>
    </location>
    <ligand>
        <name>substrate</name>
    </ligand>
</feature>
<feature type="binding site" evidence="1">
    <location>
        <position position="95"/>
    </location>
    <ligand>
        <name>NAD(+)</name>
        <dbReference type="ChEBI" id="CHEBI:57540"/>
    </ligand>
</feature>
<feature type="binding site" evidence="1">
    <location>
        <begin position="118"/>
        <end position="120"/>
    </location>
    <ligand>
        <name>NAD(+)</name>
        <dbReference type="ChEBI" id="CHEBI:57540"/>
    </ligand>
</feature>
<feature type="binding site" evidence="1">
    <location>
        <position position="120"/>
    </location>
    <ligand>
        <name>substrate</name>
    </ligand>
</feature>
<feature type="binding site" evidence="1">
    <location>
        <position position="151"/>
    </location>
    <ligand>
        <name>substrate</name>
    </ligand>
</feature>
<proteinExistence type="inferred from homology"/>
<protein>
    <recommendedName>
        <fullName evidence="1">Malate dehydrogenase</fullName>
        <ecNumber evidence="1">1.1.1.37</ecNumber>
    </recommendedName>
</protein>
<sequence>MNKLTIVGAGLVGEAAAQIIARDELCRELVLMDVQGELAQGKALDVWQAAVDSGSDTHVHGGAKAEMLEGSELVVITAGVPRKPGQSRQDVLSTNLPILDSIMADIKHHAPTATVLVVSNPVDVLTYRAWSVSGQGRDKVFGQAGVLDTARMKCFIAEQTGFSARDITALVLGGHGDSMVPLMRYCQIGSVPLSHFLSSEQIEQIVERTRKGGGEILGLKKTGSACDAPGVAIAQMVDAIGNGRNRILPAVAILEGEYGRTDIAMGVPCVLAEKGLARVIELPLDAQEQAMFDHSADQVARDIAEMKAL</sequence>
<gene>
    <name evidence="1" type="primary">mdh</name>
    <name type="ordered locus">Pput_0687</name>
</gene>
<organism>
    <name type="scientific">Pseudomonas putida (strain ATCC 700007 / DSM 6899 / JCM 31910 / BCRC 17059 / LMG 24140 / F1)</name>
    <dbReference type="NCBI Taxonomy" id="351746"/>
    <lineage>
        <taxon>Bacteria</taxon>
        <taxon>Pseudomonadati</taxon>
        <taxon>Pseudomonadota</taxon>
        <taxon>Gammaproteobacteria</taxon>
        <taxon>Pseudomonadales</taxon>
        <taxon>Pseudomonadaceae</taxon>
        <taxon>Pseudomonas</taxon>
    </lineage>
</organism>
<accession>A5VY92</accession>
<evidence type="ECO:0000255" key="1">
    <source>
        <dbReference type="HAMAP-Rule" id="MF_00487"/>
    </source>
</evidence>
<keyword id="KW-0520">NAD</keyword>
<keyword id="KW-0560">Oxidoreductase</keyword>
<keyword id="KW-0816">Tricarboxylic acid cycle</keyword>
<dbReference type="EC" id="1.1.1.37" evidence="1"/>
<dbReference type="EMBL" id="CP000712">
    <property type="protein sequence ID" value="ABQ76852.1"/>
    <property type="molecule type" value="Genomic_DNA"/>
</dbReference>
<dbReference type="SMR" id="A5VY92"/>
<dbReference type="KEGG" id="ppf:Pput_0687"/>
<dbReference type="eggNOG" id="COG0039">
    <property type="taxonomic scope" value="Bacteria"/>
</dbReference>
<dbReference type="HOGENOM" id="CLU_045401_2_1_6"/>
<dbReference type="GO" id="GO:0004459">
    <property type="term" value="F:L-lactate dehydrogenase activity"/>
    <property type="evidence" value="ECO:0007669"/>
    <property type="project" value="TreeGrafter"/>
</dbReference>
<dbReference type="GO" id="GO:0030060">
    <property type="term" value="F:L-malate dehydrogenase (NAD+) activity"/>
    <property type="evidence" value="ECO:0007669"/>
    <property type="project" value="UniProtKB-UniRule"/>
</dbReference>
<dbReference type="GO" id="GO:0006089">
    <property type="term" value="P:lactate metabolic process"/>
    <property type="evidence" value="ECO:0007669"/>
    <property type="project" value="TreeGrafter"/>
</dbReference>
<dbReference type="GO" id="GO:0006099">
    <property type="term" value="P:tricarboxylic acid cycle"/>
    <property type="evidence" value="ECO:0007669"/>
    <property type="project" value="UniProtKB-UniRule"/>
</dbReference>
<dbReference type="CDD" id="cd01339">
    <property type="entry name" value="LDH-like_MDH"/>
    <property type="match status" value="1"/>
</dbReference>
<dbReference type="Gene3D" id="3.90.110.10">
    <property type="entry name" value="Lactate dehydrogenase/glycoside hydrolase, family 4, C-terminal"/>
    <property type="match status" value="1"/>
</dbReference>
<dbReference type="Gene3D" id="3.40.50.720">
    <property type="entry name" value="NAD(P)-binding Rossmann-like Domain"/>
    <property type="match status" value="1"/>
</dbReference>
<dbReference type="HAMAP" id="MF_00487">
    <property type="entry name" value="Malate_dehydrog_3"/>
    <property type="match status" value="1"/>
</dbReference>
<dbReference type="InterPro" id="IPR001557">
    <property type="entry name" value="L-lactate/malate_DH"/>
</dbReference>
<dbReference type="InterPro" id="IPR022383">
    <property type="entry name" value="Lactate/malate_DH_C"/>
</dbReference>
<dbReference type="InterPro" id="IPR001236">
    <property type="entry name" value="Lactate/malate_DH_N"/>
</dbReference>
<dbReference type="InterPro" id="IPR015955">
    <property type="entry name" value="Lactate_DH/Glyco_Ohase_4_C"/>
</dbReference>
<dbReference type="InterPro" id="IPR011275">
    <property type="entry name" value="Malate_DH_type3"/>
</dbReference>
<dbReference type="InterPro" id="IPR036291">
    <property type="entry name" value="NAD(P)-bd_dom_sf"/>
</dbReference>
<dbReference type="NCBIfam" id="NF004863">
    <property type="entry name" value="PRK06223.1"/>
    <property type="match status" value="1"/>
</dbReference>
<dbReference type="PANTHER" id="PTHR43128">
    <property type="entry name" value="L-2-HYDROXYCARBOXYLATE DEHYDROGENASE (NAD(P)(+))"/>
    <property type="match status" value="1"/>
</dbReference>
<dbReference type="PANTHER" id="PTHR43128:SF16">
    <property type="entry name" value="L-LACTATE DEHYDROGENASE"/>
    <property type="match status" value="1"/>
</dbReference>
<dbReference type="Pfam" id="PF02866">
    <property type="entry name" value="Ldh_1_C"/>
    <property type="match status" value="1"/>
</dbReference>
<dbReference type="Pfam" id="PF00056">
    <property type="entry name" value="Ldh_1_N"/>
    <property type="match status" value="1"/>
</dbReference>
<dbReference type="PIRSF" id="PIRSF000102">
    <property type="entry name" value="Lac_mal_DH"/>
    <property type="match status" value="1"/>
</dbReference>
<dbReference type="PRINTS" id="PR00086">
    <property type="entry name" value="LLDHDRGNASE"/>
</dbReference>
<dbReference type="SUPFAM" id="SSF56327">
    <property type="entry name" value="LDH C-terminal domain-like"/>
    <property type="match status" value="1"/>
</dbReference>
<dbReference type="SUPFAM" id="SSF51735">
    <property type="entry name" value="NAD(P)-binding Rossmann-fold domains"/>
    <property type="match status" value="1"/>
</dbReference>
<comment type="function">
    <text evidence="1">Catalyzes the reversible oxidation of malate to oxaloacetate.</text>
</comment>
<comment type="catalytic activity">
    <reaction evidence="1">
        <text>(S)-malate + NAD(+) = oxaloacetate + NADH + H(+)</text>
        <dbReference type="Rhea" id="RHEA:21432"/>
        <dbReference type="ChEBI" id="CHEBI:15378"/>
        <dbReference type="ChEBI" id="CHEBI:15589"/>
        <dbReference type="ChEBI" id="CHEBI:16452"/>
        <dbReference type="ChEBI" id="CHEBI:57540"/>
        <dbReference type="ChEBI" id="CHEBI:57945"/>
        <dbReference type="EC" id="1.1.1.37"/>
    </reaction>
</comment>
<comment type="similarity">
    <text evidence="1">Belongs to the LDH/MDH superfamily. MDH type 3 family.</text>
</comment>
<reference key="1">
    <citation type="submission" date="2007-05" db="EMBL/GenBank/DDBJ databases">
        <title>Complete sequence of Pseudomonas putida F1.</title>
        <authorList>
            <consortium name="US DOE Joint Genome Institute"/>
            <person name="Copeland A."/>
            <person name="Lucas S."/>
            <person name="Lapidus A."/>
            <person name="Barry K."/>
            <person name="Detter J.C."/>
            <person name="Glavina del Rio T."/>
            <person name="Hammon N."/>
            <person name="Israni S."/>
            <person name="Dalin E."/>
            <person name="Tice H."/>
            <person name="Pitluck S."/>
            <person name="Chain P."/>
            <person name="Malfatti S."/>
            <person name="Shin M."/>
            <person name="Vergez L."/>
            <person name="Schmutz J."/>
            <person name="Larimer F."/>
            <person name="Land M."/>
            <person name="Hauser L."/>
            <person name="Kyrpides N."/>
            <person name="Lykidis A."/>
            <person name="Parales R."/>
            <person name="Richardson P."/>
        </authorList>
    </citation>
    <scope>NUCLEOTIDE SEQUENCE [LARGE SCALE GENOMIC DNA]</scope>
    <source>
        <strain>ATCC 700007 / DSM 6899 / JCM 31910 / BCRC 17059 / LMG 24140 / F1</strain>
    </source>
</reference>